<gene>
    <name evidence="1" type="primary">rplM</name>
    <name type="ordered locus">SF3271</name>
    <name type="ordered locus">S3486</name>
</gene>
<proteinExistence type="inferred from homology"/>
<accession>P0AA15</accession>
<accession>P02410</accession>
<evidence type="ECO:0000255" key="1">
    <source>
        <dbReference type="HAMAP-Rule" id="MF_01366"/>
    </source>
</evidence>
<evidence type="ECO:0000305" key="2"/>
<reference key="1">
    <citation type="journal article" date="2002" name="Nucleic Acids Res.">
        <title>Genome sequence of Shigella flexneri 2a: insights into pathogenicity through comparison with genomes of Escherichia coli K12 and O157.</title>
        <authorList>
            <person name="Jin Q."/>
            <person name="Yuan Z."/>
            <person name="Xu J."/>
            <person name="Wang Y."/>
            <person name="Shen Y."/>
            <person name="Lu W."/>
            <person name="Wang J."/>
            <person name="Liu H."/>
            <person name="Yang J."/>
            <person name="Yang F."/>
            <person name="Zhang X."/>
            <person name="Zhang J."/>
            <person name="Yang G."/>
            <person name="Wu H."/>
            <person name="Qu D."/>
            <person name="Dong J."/>
            <person name="Sun L."/>
            <person name="Xue Y."/>
            <person name="Zhao A."/>
            <person name="Gao Y."/>
            <person name="Zhu J."/>
            <person name="Kan B."/>
            <person name="Ding K."/>
            <person name="Chen S."/>
            <person name="Cheng H."/>
            <person name="Yao Z."/>
            <person name="He B."/>
            <person name="Chen R."/>
            <person name="Ma D."/>
            <person name="Qiang B."/>
            <person name="Wen Y."/>
            <person name="Hou Y."/>
            <person name="Yu J."/>
        </authorList>
    </citation>
    <scope>NUCLEOTIDE SEQUENCE [LARGE SCALE GENOMIC DNA]</scope>
    <source>
        <strain>301 / Serotype 2a</strain>
    </source>
</reference>
<reference key="2">
    <citation type="journal article" date="2003" name="Infect. Immun.">
        <title>Complete genome sequence and comparative genomics of Shigella flexneri serotype 2a strain 2457T.</title>
        <authorList>
            <person name="Wei J."/>
            <person name="Goldberg M.B."/>
            <person name="Burland V."/>
            <person name="Venkatesan M.M."/>
            <person name="Deng W."/>
            <person name="Fournier G."/>
            <person name="Mayhew G.F."/>
            <person name="Plunkett G. III"/>
            <person name="Rose D.J."/>
            <person name="Darling A."/>
            <person name="Mau B."/>
            <person name="Perna N.T."/>
            <person name="Payne S.M."/>
            <person name="Runyen-Janecky L.J."/>
            <person name="Zhou S."/>
            <person name="Schwartz D.C."/>
            <person name="Blattner F.R."/>
        </authorList>
    </citation>
    <scope>NUCLEOTIDE SEQUENCE [LARGE SCALE GENOMIC DNA]</scope>
    <source>
        <strain>ATCC 700930 / 2457T / Serotype 2a</strain>
    </source>
</reference>
<sequence>MKTFTAKPETVKRDWYVVDATGKTLGRLATELARRLRGKHKAEYTPHVDTGDYIIVLNADKVAVTGNKRTDKVYYHHTGHIGGIKQATFEEMIARRPERVIEIAVKGMLPKGPLGRAMFRKLKVYAGNEHNHAAQQPQVLDI</sequence>
<comment type="function">
    <text evidence="1">This protein is one of the early assembly proteins of the 50S ribosomal subunit, although it is not seen to bind rRNA by itself. It is important during the early stages of 50S assembly.</text>
</comment>
<comment type="subunit">
    <text evidence="1">Part of the 50S ribosomal subunit.</text>
</comment>
<comment type="similarity">
    <text evidence="1">Belongs to the universal ribosomal protein uL13 family.</text>
</comment>
<protein>
    <recommendedName>
        <fullName evidence="1">Large ribosomal subunit protein uL13</fullName>
    </recommendedName>
    <alternativeName>
        <fullName evidence="2">50S ribosomal protein L13</fullName>
    </alternativeName>
</protein>
<feature type="chain" id="PRO_0000133749" description="Large ribosomal subunit protein uL13">
    <location>
        <begin position="1"/>
        <end position="142"/>
    </location>
</feature>
<name>RL13_SHIFL</name>
<keyword id="KW-1185">Reference proteome</keyword>
<keyword id="KW-0687">Ribonucleoprotein</keyword>
<keyword id="KW-0689">Ribosomal protein</keyword>
<dbReference type="EMBL" id="AE005674">
    <property type="protein sequence ID" value="AAN44735.2"/>
    <property type="molecule type" value="Genomic_DNA"/>
</dbReference>
<dbReference type="EMBL" id="AE014073">
    <property type="protein sequence ID" value="AAP18546.1"/>
    <property type="molecule type" value="Genomic_DNA"/>
</dbReference>
<dbReference type="RefSeq" id="NP_709028.2">
    <property type="nucleotide sequence ID" value="NC_004337.2"/>
</dbReference>
<dbReference type="RefSeq" id="WP_000847559.1">
    <property type="nucleotide sequence ID" value="NZ_WPGW01000026.1"/>
</dbReference>
<dbReference type="SMR" id="P0AA15"/>
<dbReference type="STRING" id="198214.SF3271"/>
<dbReference type="PaxDb" id="198214-SF3271"/>
<dbReference type="GeneID" id="1027104"/>
<dbReference type="GeneID" id="89518067"/>
<dbReference type="KEGG" id="sfl:SF3271"/>
<dbReference type="KEGG" id="sfx:S3486"/>
<dbReference type="PATRIC" id="fig|198214.7.peg.3876"/>
<dbReference type="HOGENOM" id="CLU_082184_2_2_6"/>
<dbReference type="Proteomes" id="UP000001006">
    <property type="component" value="Chromosome"/>
</dbReference>
<dbReference type="Proteomes" id="UP000002673">
    <property type="component" value="Chromosome"/>
</dbReference>
<dbReference type="GO" id="GO:0022625">
    <property type="term" value="C:cytosolic large ribosomal subunit"/>
    <property type="evidence" value="ECO:0007669"/>
    <property type="project" value="TreeGrafter"/>
</dbReference>
<dbReference type="GO" id="GO:0003729">
    <property type="term" value="F:mRNA binding"/>
    <property type="evidence" value="ECO:0007669"/>
    <property type="project" value="TreeGrafter"/>
</dbReference>
<dbReference type="GO" id="GO:0003735">
    <property type="term" value="F:structural constituent of ribosome"/>
    <property type="evidence" value="ECO:0007669"/>
    <property type="project" value="InterPro"/>
</dbReference>
<dbReference type="GO" id="GO:0017148">
    <property type="term" value="P:negative regulation of translation"/>
    <property type="evidence" value="ECO:0007669"/>
    <property type="project" value="TreeGrafter"/>
</dbReference>
<dbReference type="GO" id="GO:0006412">
    <property type="term" value="P:translation"/>
    <property type="evidence" value="ECO:0007669"/>
    <property type="project" value="UniProtKB-UniRule"/>
</dbReference>
<dbReference type="CDD" id="cd00392">
    <property type="entry name" value="Ribosomal_L13"/>
    <property type="match status" value="1"/>
</dbReference>
<dbReference type="FunFam" id="3.90.1180.10:FF:000001">
    <property type="entry name" value="50S ribosomal protein L13"/>
    <property type="match status" value="1"/>
</dbReference>
<dbReference type="Gene3D" id="3.90.1180.10">
    <property type="entry name" value="Ribosomal protein L13"/>
    <property type="match status" value="1"/>
</dbReference>
<dbReference type="HAMAP" id="MF_01366">
    <property type="entry name" value="Ribosomal_uL13"/>
    <property type="match status" value="1"/>
</dbReference>
<dbReference type="InterPro" id="IPR005822">
    <property type="entry name" value="Ribosomal_uL13"/>
</dbReference>
<dbReference type="InterPro" id="IPR005823">
    <property type="entry name" value="Ribosomal_uL13_bac-type"/>
</dbReference>
<dbReference type="InterPro" id="IPR023563">
    <property type="entry name" value="Ribosomal_uL13_CS"/>
</dbReference>
<dbReference type="InterPro" id="IPR036899">
    <property type="entry name" value="Ribosomal_uL13_sf"/>
</dbReference>
<dbReference type="NCBIfam" id="TIGR01066">
    <property type="entry name" value="rplM_bact"/>
    <property type="match status" value="1"/>
</dbReference>
<dbReference type="PANTHER" id="PTHR11545:SF2">
    <property type="entry name" value="LARGE RIBOSOMAL SUBUNIT PROTEIN UL13M"/>
    <property type="match status" value="1"/>
</dbReference>
<dbReference type="PANTHER" id="PTHR11545">
    <property type="entry name" value="RIBOSOMAL PROTEIN L13"/>
    <property type="match status" value="1"/>
</dbReference>
<dbReference type="Pfam" id="PF00572">
    <property type="entry name" value="Ribosomal_L13"/>
    <property type="match status" value="1"/>
</dbReference>
<dbReference type="PIRSF" id="PIRSF002181">
    <property type="entry name" value="Ribosomal_L13"/>
    <property type="match status" value="1"/>
</dbReference>
<dbReference type="SUPFAM" id="SSF52161">
    <property type="entry name" value="Ribosomal protein L13"/>
    <property type="match status" value="1"/>
</dbReference>
<dbReference type="PROSITE" id="PS00783">
    <property type="entry name" value="RIBOSOMAL_L13"/>
    <property type="match status" value="1"/>
</dbReference>
<organism>
    <name type="scientific">Shigella flexneri</name>
    <dbReference type="NCBI Taxonomy" id="623"/>
    <lineage>
        <taxon>Bacteria</taxon>
        <taxon>Pseudomonadati</taxon>
        <taxon>Pseudomonadota</taxon>
        <taxon>Gammaproteobacteria</taxon>
        <taxon>Enterobacterales</taxon>
        <taxon>Enterobacteriaceae</taxon>
        <taxon>Shigella</taxon>
    </lineage>
</organism>